<dbReference type="EC" id="5.3.1.16" evidence="1"/>
<dbReference type="EMBL" id="CP001657">
    <property type="protein sequence ID" value="ACT12781.1"/>
    <property type="molecule type" value="Genomic_DNA"/>
</dbReference>
<dbReference type="RefSeq" id="WP_005967577.1">
    <property type="nucleotide sequence ID" value="NC_012917.1"/>
</dbReference>
<dbReference type="SMR" id="C6DF72"/>
<dbReference type="STRING" id="561230.PC1_1740"/>
<dbReference type="GeneID" id="67793743"/>
<dbReference type="KEGG" id="pct:PC1_1740"/>
<dbReference type="eggNOG" id="COG0106">
    <property type="taxonomic scope" value="Bacteria"/>
</dbReference>
<dbReference type="HOGENOM" id="CLU_048577_1_2_6"/>
<dbReference type="OrthoDB" id="9807749at2"/>
<dbReference type="UniPathway" id="UPA00031">
    <property type="reaction ID" value="UER00009"/>
</dbReference>
<dbReference type="Proteomes" id="UP000002736">
    <property type="component" value="Chromosome"/>
</dbReference>
<dbReference type="GO" id="GO:0005737">
    <property type="term" value="C:cytoplasm"/>
    <property type="evidence" value="ECO:0007669"/>
    <property type="project" value="UniProtKB-SubCell"/>
</dbReference>
<dbReference type="GO" id="GO:0003949">
    <property type="term" value="F:1-(5-phosphoribosyl)-5-[(5-phosphoribosylamino)methylideneamino]imidazole-4-carboxamide isomerase activity"/>
    <property type="evidence" value="ECO:0007669"/>
    <property type="project" value="UniProtKB-UniRule"/>
</dbReference>
<dbReference type="GO" id="GO:0000105">
    <property type="term" value="P:L-histidine biosynthetic process"/>
    <property type="evidence" value="ECO:0007669"/>
    <property type="project" value="UniProtKB-UniRule"/>
</dbReference>
<dbReference type="GO" id="GO:0000162">
    <property type="term" value="P:L-tryptophan biosynthetic process"/>
    <property type="evidence" value="ECO:0007669"/>
    <property type="project" value="TreeGrafter"/>
</dbReference>
<dbReference type="CDD" id="cd04732">
    <property type="entry name" value="HisA"/>
    <property type="match status" value="1"/>
</dbReference>
<dbReference type="FunFam" id="3.20.20.70:FF:000009">
    <property type="entry name" value="1-(5-phosphoribosyl)-5-[(5-phosphoribosylamino)methylideneamino] imidazole-4-carboxamide isomerase"/>
    <property type="match status" value="1"/>
</dbReference>
<dbReference type="Gene3D" id="3.20.20.70">
    <property type="entry name" value="Aldolase class I"/>
    <property type="match status" value="1"/>
</dbReference>
<dbReference type="HAMAP" id="MF_01014">
    <property type="entry name" value="HisA"/>
    <property type="match status" value="1"/>
</dbReference>
<dbReference type="InterPro" id="IPR013785">
    <property type="entry name" value="Aldolase_TIM"/>
</dbReference>
<dbReference type="InterPro" id="IPR006062">
    <property type="entry name" value="His_biosynth"/>
</dbReference>
<dbReference type="InterPro" id="IPR006063">
    <property type="entry name" value="HisA_bact_arch"/>
</dbReference>
<dbReference type="InterPro" id="IPR044524">
    <property type="entry name" value="Isoase_HisA-like"/>
</dbReference>
<dbReference type="InterPro" id="IPR023016">
    <property type="entry name" value="Isoase_HisA-like_bact"/>
</dbReference>
<dbReference type="InterPro" id="IPR011060">
    <property type="entry name" value="RibuloseP-bd_barrel"/>
</dbReference>
<dbReference type="NCBIfam" id="TIGR00007">
    <property type="entry name" value="1-(5-phosphoribosyl)-5-[(5-phosphoribosylamino)methylideneamino]imidazole-4-carboxamide isomerase"/>
    <property type="match status" value="1"/>
</dbReference>
<dbReference type="PANTHER" id="PTHR43090">
    <property type="entry name" value="1-(5-PHOSPHORIBOSYL)-5-[(5-PHOSPHORIBOSYLAMINO)METHYLIDENEAMINO] IMIDAZOLE-4-CARBOXAMIDE ISOMERASE"/>
    <property type="match status" value="1"/>
</dbReference>
<dbReference type="PANTHER" id="PTHR43090:SF2">
    <property type="entry name" value="1-(5-PHOSPHORIBOSYL)-5-[(5-PHOSPHORIBOSYLAMINO)METHYLIDENEAMINO] IMIDAZOLE-4-CARBOXAMIDE ISOMERASE"/>
    <property type="match status" value="1"/>
</dbReference>
<dbReference type="Pfam" id="PF00977">
    <property type="entry name" value="His_biosynth"/>
    <property type="match status" value="1"/>
</dbReference>
<dbReference type="SUPFAM" id="SSF51366">
    <property type="entry name" value="Ribulose-phoshate binding barrel"/>
    <property type="match status" value="1"/>
</dbReference>
<reference key="1">
    <citation type="submission" date="2009-07" db="EMBL/GenBank/DDBJ databases">
        <title>Complete sequence of Pectobacterium carotovorum subsp. carotovorum PC1.</title>
        <authorList>
            <consortium name="US DOE Joint Genome Institute"/>
            <person name="Lucas S."/>
            <person name="Copeland A."/>
            <person name="Lapidus A."/>
            <person name="Glavina del Rio T."/>
            <person name="Tice H."/>
            <person name="Bruce D."/>
            <person name="Goodwin L."/>
            <person name="Pitluck S."/>
            <person name="Munk A.C."/>
            <person name="Brettin T."/>
            <person name="Detter J.C."/>
            <person name="Han C."/>
            <person name="Tapia R."/>
            <person name="Larimer F."/>
            <person name="Land M."/>
            <person name="Hauser L."/>
            <person name="Kyrpides N."/>
            <person name="Mikhailova N."/>
            <person name="Balakrishnan V."/>
            <person name="Glasner J."/>
            <person name="Perna N.T."/>
        </authorList>
    </citation>
    <scope>NUCLEOTIDE SEQUENCE [LARGE SCALE GENOMIC DNA]</scope>
    <source>
        <strain>PC1</strain>
    </source>
</reference>
<accession>C6DF72</accession>
<proteinExistence type="inferred from homology"/>
<keyword id="KW-0028">Amino-acid biosynthesis</keyword>
<keyword id="KW-0963">Cytoplasm</keyword>
<keyword id="KW-0368">Histidine biosynthesis</keyword>
<keyword id="KW-0413">Isomerase</keyword>
<evidence type="ECO:0000255" key="1">
    <source>
        <dbReference type="HAMAP-Rule" id="MF_01014"/>
    </source>
</evidence>
<name>HIS4_PECCP</name>
<gene>
    <name evidence="1" type="primary">hisA</name>
    <name type="ordered locus">PC1_1740</name>
</gene>
<protein>
    <recommendedName>
        <fullName evidence="1">1-(5-phosphoribosyl)-5-[(5-phosphoribosylamino)methylideneamino] imidazole-4-carboxamide isomerase</fullName>
        <ecNumber evidence="1">5.3.1.16</ecNumber>
    </recommendedName>
    <alternativeName>
        <fullName evidence="1">Phosphoribosylformimino-5-aminoimidazole carboxamide ribotide isomerase</fullName>
    </alternativeName>
</protein>
<sequence length="245" mass="26335">MIIPALDLIDGQVVRLHQGDYGQQRQYGSDPLPRLQDYQQQGAGVLHLVDLTGAKDPSARQIPLLTTLLAGVSVPVQIGGGIRTEQDVEALLKAGASRVVIGSTAVKQPELVQQWFTRYGAEALVLALDVRIDANGTKFVAISGWQENSDATLEQVVEQYLPFGLKHVLCTDISRDGTLSGSNVELYREISQRYPQIAFQASGGIGNLTDIANLRGSGVQGVIVGRALLEGKFNVAEAISCWQNG</sequence>
<comment type="catalytic activity">
    <reaction evidence="1">
        <text>1-(5-phospho-beta-D-ribosyl)-5-[(5-phospho-beta-D-ribosylamino)methylideneamino]imidazole-4-carboxamide = 5-[(5-phospho-1-deoxy-D-ribulos-1-ylimino)methylamino]-1-(5-phospho-beta-D-ribosyl)imidazole-4-carboxamide</text>
        <dbReference type="Rhea" id="RHEA:15469"/>
        <dbReference type="ChEBI" id="CHEBI:58435"/>
        <dbReference type="ChEBI" id="CHEBI:58525"/>
        <dbReference type="EC" id="5.3.1.16"/>
    </reaction>
</comment>
<comment type="pathway">
    <text evidence="1">Amino-acid biosynthesis; L-histidine biosynthesis; L-histidine from 5-phospho-alpha-D-ribose 1-diphosphate: step 4/9.</text>
</comment>
<comment type="subcellular location">
    <subcellularLocation>
        <location evidence="1">Cytoplasm</location>
    </subcellularLocation>
</comment>
<comment type="similarity">
    <text evidence="1">Belongs to the HisA/HisF family.</text>
</comment>
<organism>
    <name type="scientific">Pectobacterium carotovorum subsp. carotovorum (strain PC1)</name>
    <dbReference type="NCBI Taxonomy" id="561230"/>
    <lineage>
        <taxon>Bacteria</taxon>
        <taxon>Pseudomonadati</taxon>
        <taxon>Pseudomonadota</taxon>
        <taxon>Gammaproteobacteria</taxon>
        <taxon>Enterobacterales</taxon>
        <taxon>Pectobacteriaceae</taxon>
        <taxon>Pectobacterium</taxon>
    </lineage>
</organism>
<feature type="chain" id="PRO_1000213232" description="1-(5-phosphoribosyl)-5-[(5-phosphoribosylamino)methylideneamino] imidazole-4-carboxamide isomerase">
    <location>
        <begin position="1"/>
        <end position="245"/>
    </location>
</feature>
<feature type="active site" description="Proton acceptor" evidence="1">
    <location>
        <position position="7"/>
    </location>
</feature>
<feature type="active site" description="Proton donor" evidence="1">
    <location>
        <position position="129"/>
    </location>
</feature>